<accession>I1RVD8</accession>
<accession>A0A098DC30</accession>
<reference key="1">
    <citation type="journal article" date="2007" name="Science">
        <title>The Fusarium graminearum genome reveals a link between localized polymorphism and pathogen specialization.</title>
        <authorList>
            <person name="Cuomo C.A."/>
            <person name="Gueldener U."/>
            <person name="Xu J.-R."/>
            <person name="Trail F."/>
            <person name="Turgeon B.G."/>
            <person name="Di Pietro A."/>
            <person name="Walton J.D."/>
            <person name="Ma L.-J."/>
            <person name="Baker S.E."/>
            <person name="Rep M."/>
            <person name="Adam G."/>
            <person name="Antoniw J."/>
            <person name="Baldwin T."/>
            <person name="Calvo S.E."/>
            <person name="Chang Y.-L."/>
            <person name="DeCaprio D."/>
            <person name="Gale L.R."/>
            <person name="Gnerre S."/>
            <person name="Goswami R.S."/>
            <person name="Hammond-Kosack K."/>
            <person name="Harris L.J."/>
            <person name="Hilburn K."/>
            <person name="Kennell J.C."/>
            <person name="Kroken S."/>
            <person name="Magnuson J.K."/>
            <person name="Mannhaupt G."/>
            <person name="Mauceli E.W."/>
            <person name="Mewes H.-W."/>
            <person name="Mitterbauer R."/>
            <person name="Muehlbauer G."/>
            <person name="Muensterkoetter M."/>
            <person name="Nelson D."/>
            <person name="O'Donnell K."/>
            <person name="Ouellet T."/>
            <person name="Qi W."/>
            <person name="Quesneville H."/>
            <person name="Roncero M.I.G."/>
            <person name="Seong K.-Y."/>
            <person name="Tetko I.V."/>
            <person name="Urban M."/>
            <person name="Waalwijk C."/>
            <person name="Ward T.J."/>
            <person name="Yao J."/>
            <person name="Birren B.W."/>
            <person name="Kistler H.C."/>
        </authorList>
    </citation>
    <scope>NUCLEOTIDE SEQUENCE [LARGE SCALE GENOMIC DNA]</scope>
    <source>
        <strain>ATCC MYA-4620 / CBS 123657 / FGSC 9075 / NRRL 31084 / PH-1</strain>
    </source>
</reference>
<reference key="2">
    <citation type="journal article" date="2010" name="Nature">
        <title>Comparative genomics reveals mobile pathogenicity chromosomes in Fusarium.</title>
        <authorList>
            <person name="Ma L.-J."/>
            <person name="van der Does H.C."/>
            <person name="Borkovich K.A."/>
            <person name="Coleman J.J."/>
            <person name="Daboussi M.-J."/>
            <person name="Di Pietro A."/>
            <person name="Dufresne M."/>
            <person name="Freitag M."/>
            <person name="Grabherr M."/>
            <person name="Henrissat B."/>
            <person name="Houterman P.M."/>
            <person name="Kang S."/>
            <person name="Shim W.-B."/>
            <person name="Woloshuk C."/>
            <person name="Xie X."/>
            <person name="Xu J.-R."/>
            <person name="Antoniw J."/>
            <person name="Baker S.E."/>
            <person name="Bluhm B.H."/>
            <person name="Breakspear A."/>
            <person name="Brown D.W."/>
            <person name="Butchko R.A.E."/>
            <person name="Chapman S."/>
            <person name="Coulson R."/>
            <person name="Coutinho P.M."/>
            <person name="Danchin E.G.J."/>
            <person name="Diener A."/>
            <person name="Gale L.R."/>
            <person name="Gardiner D.M."/>
            <person name="Goff S."/>
            <person name="Hammond-Kosack K.E."/>
            <person name="Hilburn K."/>
            <person name="Hua-Van A."/>
            <person name="Jonkers W."/>
            <person name="Kazan K."/>
            <person name="Kodira C.D."/>
            <person name="Koehrsen M."/>
            <person name="Kumar L."/>
            <person name="Lee Y.-H."/>
            <person name="Li L."/>
            <person name="Manners J.M."/>
            <person name="Miranda-Saavedra D."/>
            <person name="Mukherjee M."/>
            <person name="Park G."/>
            <person name="Park J."/>
            <person name="Park S.-Y."/>
            <person name="Proctor R.H."/>
            <person name="Regev A."/>
            <person name="Ruiz-Roldan M.C."/>
            <person name="Sain D."/>
            <person name="Sakthikumar S."/>
            <person name="Sykes S."/>
            <person name="Schwartz D.C."/>
            <person name="Turgeon B.G."/>
            <person name="Wapinski I."/>
            <person name="Yoder O."/>
            <person name="Young S."/>
            <person name="Zeng Q."/>
            <person name="Zhou S."/>
            <person name="Galagan J."/>
            <person name="Cuomo C.A."/>
            <person name="Kistler H.C."/>
            <person name="Rep M."/>
        </authorList>
    </citation>
    <scope>GENOME REANNOTATION</scope>
    <source>
        <strain>ATCC MYA-4620 / CBS 123657 / FGSC 9075 / NRRL 31084 / PH-1</strain>
    </source>
</reference>
<reference key="3">
    <citation type="journal article" date="2015" name="BMC Genomics">
        <title>The completed genome sequence of the pathogenic ascomycete fungus Fusarium graminearum.</title>
        <authorList>
            <person name="King R."/>
            <person name="Urban M."/>
            <person name="Hammond-Kosack M.C.U."/>
            <person name="Hassani-Pak K."/>
            <person name="Hammond-Kosack K.E."/>
        </authorList>
    </citation>
    <scope>NUCLEOTIDE SEQUENCE [LARGE SCALE GENOMIC DNA]</scope>
    <source>
        <strain>ATCC MYA-4620 / CBS 123657 / FGSC 9075 / NRRL 31084 / PH-1</strain>
    </source>
</reference>
<reference key="4">
    <citation type="journal article" date="2014" name="J. Nat. Prod.">
        <title>Identification of the biosynthetic gene clusters for the lipopeptides fusaristatin A and W493 B in Fusarium graminearum and F. pseudograminearum.</title>
        <authorList>
            <person name="Soerensen J.L."/>
            <person name="Sondergaard T.E."/>
            <person name="Covarelli L."/>
            <person name="Fuertes P.R."/>
            <person name="Hansen F.T."/>
            <person name="Frandsen R.J."/>
            <person name="Saei W."/>
            <person name="Lukassen M.B."/>
            <person name="Wimmer R."/>
            <person name="Nielsen K.F."/>
            <person name="Gardiner D.M."/>
            <person name="Giese H."/>
        </authorList>
    </citation>
    <scope>IDENTIFICATION</scope>
    <scope>FUNCTION</scope>
    <scope>DISRUPTION PHENOTYPE</scope>
    <scope>PATHWAY</scope>
</reference>
<keyword id="KW-0012">Acyltransferase</keyword>
<keyword id="KW-0489">Methyltransferase</keyword>
<keyword id="KW-0511">Multifunctional enzyme</keyword>
<keyword id="KW-0521">NADP</keyword>
<keyword id="KW-0560">Oxidoreductase</keyword>
<keyword id="KW-0596">Phosphopantetheine</keyword>
<keyword id="KW-0597">Phosphoprotein</keyword>
<keyword id="KW-1185">Reference proteome</keyword>
<keyword id="KW-0949">S-adenosyl-L-methionine</keyword>
<keyword id="KW-0808">Transferase</keyword>
<name>FUSA1_GIBZE</name>
<dbReference type="EC" id="2.3.1.-" evidence="8"/>
<dbReference type="EMBL" id="HG970333">
    <property type="protein sequence ID" value="CEF76488.1"/>
    <property type="molecule type" value="Genomic_DNA"/>
</dbReference>
<dbReference type="RefSeq" id="XP_011320599.1">
    <property type="nucleotide sequence ID" value="XM_011322297.1"/>
</dbReference>
<dbReference type="SMR" id="I1RVD8"/>
<dbReference type="STRING" id="229533.I1RVD8"/>
<dbReference type="GeneID" id="23555233"/>
<dbReference type="KEGG" id="fgr:FGSG_08208"/>
<dbReference type="VEuPathDB" id="FungiDB:FGRAMPH1_01G09371"/>
<dbReference type="eggNOG" id="KOG1202">
    <property type="taxonomic scope" value="Eukaryota"/>
</dbReference>
<dbReference type="HOGENOM" id="CLU_000022_31_1_1"/>
<dbReference type="InParanoid" id="I1RVD8"/>
<dbReference type="OrthoDB" id="58138at110618"/>
<dbReference type="Proteomes" id="UP000070720">
    <property type="component" value="Chromosome 2"/>
</dbReference>
<dbReference type="GO" id="GO:0004315">
    <property type="term" value="F:3-oxoacyl-[acyl-carrier-protein] synthase activity"/>
    <property type="evidence" value="ECO:0007669"/>
    <property type="project" value="InterPro"/>
</dbReference>
<dbReference type="GO" id="GO:0004312">
    <property type="term" value="F:fatty acid synthase activity"/>
    <property type="evidence" value="ECO:0007669"/>
    <property type="project" value="TreeGrafter"/>
</dbReference>
<dbReference type="GO" id="GO:0008168">
    <property type="term" value="F:methyltransferase activity"/>
    <property type="evidence" value="ECO:0007669"/>
    <property type="project" value="UniProtKB-KW"/>
</dbReference>
<dbReference type="GO" id="GO:0016491">
    <property type="term" value="F:oxidoreductase activity"/>
    <property type="evidence" value="ECO:0007669"/>
    <property type="project" value="UniProtKB-KW"/>
</dbReference>
<dbReference type="GO" id="GO:0031177">
    <property type="term" value="F:phosphopantetheine binding"/>
    <property type="evidence" value="ECO:0007669"/>
    <property type="project" value="InterPro"/>
</dbReference>
<dbReference type="GO" id="GO:0006633">
    <property type="term" value="P:fatty acid biosynthetic process"/>
    <property type="evidence" value="ECO:0007669"/>
    <property type="project" value="InterPro"/>
</dbReference>
<dbReference type="GO" id="GO:0032259">
    <property type="term" value="P:methylation"/>
    <property type="evidence" value="ECO:0007669"/>
    <property type="project" value="UniProtKB-KW"/>
</dbReference>
<dbReference type="GO" id="GO:0044550">
    <property type="term" value="P:secondary metabolite biosynthetic process"/>
    <property type="evidence" value="ECO:0007669"/>
    <property type="project" value="TreeGrafter"/>
</dbReference>
<dbReference type="CDD" id="cd02440">
    <property type="entry name" value="AdoMet_MTases"/>
    <property type="match status" value="1"/>
</dbReference>
<dbReference type="CDD" id="cd05195">
    <property type="entry name" value="enoyl_red"/>
    <property type="match status" value="1"/>
</dbReference>
<dbReference type="CDD" id="cd00833">
    <property type="entry name" value="PKS"/>
    <property type="match status" value="1"/>
</dbReference>
<dbReference type="FunFam" id="3.40.50.720:FF:000209">
    <property type="entry name" value="Polyketide synthase Pks12"/>
    <property type="match status" value="1"/>
</dbReference>
<dbReference type="Gene3D" id="3.30.70.3290">
    <property type="match status" value="1"/>
</dbReference>
<dbReference type="Gene3D" id="3.40.47.10">
    <property type="match status" value="1"/>
</dbReference>
<dbReference type="Gene3D" id="1.10.1200.10">
    <property type="entry name" value="ACP-like"/>
    <property type="match status" value="1"/>
</dbReference>
<dbReference type="Gene3D" id="3.40.366.10">
    <property type="entry name" value="Malonyl-Coenzyme A Acyl Carrier Protein, domain 2"/>
    <property type="match status" value="1"/>
</dbReference>
<dbReference type="Gene3D" id="3.90.180.10">
    <property type="entry name" value="Medium-chain alcohol dehydrogenases, catalytic domain"/>
    <property type="match status" value="1"/>
</dbReference>
<dbReference type="Gene3D" id="3.40.50.720">
    <property type="entry name" value="NAD(P)-binding Rossmann-like Domain"/>
    <property type="match status" value="1"/>
</dbReference>
<dbReference type="Gene3D" id="3.10.129.110">
    <property type="entry name" value="Polyketide synthase dehydratase"/>
    <property type="match status" value="1"/>
</dbReference>
<dbReference type="Gene3D" id="3.40.50.150">
    <property type="entry name" value="Vaccinia Virus protein VP39"/>
    <property type="match status" value="1"/>
</dbReference>
<dbReference type="InterPro" id="IPR001227">
    <property type="entry name" value="Ac_transferase_dom_sf"/>
</dbReference>
<dbReference type="InterPro" id="IPR036736">
    <property type="entry name" value="ACP-like_sf"/>
</dbReference>
<dbReference type="InterPro" id="IPR014043">
    <property type="entry name" value="Acyl_transferase_dom"/>
</dbReference>
<dbReference type="InterPro" id="IPR016035">
    <property type="entry name" value="Acyl_Trfase/lysoPLipase"/>
</dbReference>
<dbReference type="InterPro" id="IPR011032">
    <property type="entry name" value="GroES-like_sf"/>
</dbReference>
<dbReference type="InterPro" id="IPR018201">
    <property type="entry name" value="Ketoacyl_synth_AS"/>
</dbReference>
<dbReference type="InterPro" id="IPR014031">
    <property type="entry name" value="Ketoacyl_synth_C"/>
</dbReference>
<dbReference type="InterPro" id="IPR014030">
    <property type="entry name" value="Ketoacyl_synth_N"/>
</dbReference>
<dbReference type="InterPro" id="IPR016036">
    <property type="entry name" value="Malonyl_transacylase_ACP-bd"/>
</dbReference>
<dbReference type="InterPro" id="IPR013217">
    <property type="entry name" value="Methyltransf_12"/>
</dbReference>
<dbReference type="InterPro" id="IPR036291">
    <property type="entry name" value="NAD(P)-bd_dom_sf"/>
</dbReference>
<dbReference type="InterPro" id="IPR032821">
    <property type="entry name" value="PKS_assoc"/>
</dbReference>
<dbReference type="InterPro" id="IPR020841">
    <property type="entry name" value="PKS_Beta-ketoAc_synthase_dom"/>
</dbReference>
<dbReference type="InterPro" id="IPR042104">
    <property type="entry name" value="PKS_dehydratase_sf"/>
</dbReference>
<dbReference type="InterPro" id="IPR020807">
    <property type="entry name" value="PKS_DH"/>
</dbReference>
<dbReference type="InterPro" id="IPR049551">
    <property type="entry name" value="PKS_DH_C"/>
</dbReference>
<dbReference type="InterPro" id="IPR049552">
    <property type="entry name" value="PKS_DH_N"/>
</dbReference>
<dbReference type="InterPro" id="IPR020843">
    <property type="entry name" value="PKS_ER"/>
</dbReference>
<dbReference type="InterPro" id="IPR013968">
    <property type="entry name" value="PKS_KR"/>
</dbReference>
<dbReference type="InterPro" id="IPR049900">
    <property type="entry name" value="PKS_mFAS_DH"/>
</dbReference>
<dbReference type="InterPro" id="IPR050091">
    <property type="entry name" value="PKS_NRPS_Biosynth_Enz"/>
</dbReference>
<dbReference type="InterPro" id="IPR020806">
    <property type="entry name" value="PKS_PP-bd"/>
</dbReference>
<dbReference type="InterPro" id="IPR009081">
    <property type="entry name" value="PP-bd_ACP"/>
</dbReference>
<dbReference type="InterPro" id="IPR006162">
    <property type="entry name" value="Ppantetheine_attach_site"/>
</dbReference>
<dbReference type="InterPro" id="IPR029063">
    <property type="entry name" value="SAM-dependent_MTases_sf"/>
</dbReference>
<dbReference type="InterPro" id="IPR016039">
    <property type="entry name" value="Thiolase-like"/>
</dbReference>
<dbReference type="PANTHER" id="PTHR43775:SF29">
    <property type="entry name" value="ASPERFURANONE POLYKETIDE SYNTHASE AFOG-RELATED"/>
    <property type="match status" value="1"/>
</dbReference>
<dbReference type="PANTHER" id="PTHR43775">
    <property type="entry name" value="FATTY ACID SYNTHASE"/>
    <property type="match status" value="1"/>
</dbReference>
<dbReference type="Pfam" id="PF23297">
    <property type="entry name" value="ACP_SdgA_C"/>
    <property type="match status" value="1"/>
</dbReference>
<dbReference type="Pfam" id="PF00698">
    <property type="entry name" value="Acyl_transf_1"/>
    <property type="match status" value="1"/>
</dbReference>
<dbReference type="Pfam" id="PF13602">
    <property type="entry name" value="ADH_zinc_N_2"/>
    <property type="match status" value="1"/>
</dbReference>
<dbReference type="Pfam" id="PF16197">
    <property type="entry name" value="KAsynt_C_assoc"/>
    <property type="match status" value="1"/>
</dbReference>
<dbReference type="Pfam" id="PF00109">
    <property type="entry name" value="ketoacyl-synt"/>
    <property type="match status" value="1"/>
</dbReference>
<dbReference type="Pfam" id="PF02801">
    <property type="entry name" value="Ketoacyl-synt_C"/>
    <property type="match status" value="1"/>
</dbReference>
<dbReference type="Pfam" id="PF08659">
    <property type="entry name" value="KR"/>
    <property type="match status" value="1"/>
</dbReference>
<dbReference type="Pfam" id="PF08242">
    <property type="entry name" value="Methyltransf_12"/>
    <property type="match status" value="1"/>
</dbReference>
<dbReference type="Pfam" id="PF21089">
    <property type="entry name" value="PKS_DH_N"/>
    <property type="match status" value="1"/>
</dbReference>
<dbReference type="Pfam" id="PF14765">
    <property type="entry name" value="PS-DH"/>
    <property type="match status" value="1"/>
</dbReference>
<dbReference type="SMART" id="SM00827">
    <property type="entry name" value="PKS_AT"/>
    <property type="match status" value="1"/>
</dbReference>
<dbReference type="SMART" id="SM00826">
    <property type="entry name" value="PKS_DH"/>
    <property type="match status" value="1"/>
</dbReference>
<dbReference type="SMART" id="SM00829">
    <property type="entry name" value="PKS_ER"/>
    <property type="match status" value="1"/>
</dbReference>
<dbReference type="SMART" id="SM00822">
    <property type="entry name" value="PKS_KR"/>
    <property type="match status" value="1"/>
</dbReference>
<dbReference type="SMART" id="SM00825">
    <property type="entry name" value="PKS_KS"/>
    <property type="match status" value="1"/>
</dbReference>
<dbReference type="SMART" id="SM00823">
    <property type="entry name" value="PKS_PP"/>
    <property type="match status" value="1"/>
</dbReference>
<dbReference type="SUPFAM" id="SSF47336">
    <property type="entry name" value="ACP-like"/>
    <property type="match status" value="1"/>
</dbReference>
<dbReference type="SUPFAM" id="SSF52151">
    <property type="entry name" value="FabD/lysophospholipase-like"/>
    <property type="match status" value="1"/>
</dbReference>
<dbReference type="SUPFAM" id="SSF50129">
    <property type="entry name" value="GroES-like"/>
    <property type="match status" value="1"/>
</dbReference>
<dbReference type="SUPFAM" id="SSF51735">
    <property type="entry name" value="NAD(P)-binding Rossmann-fold domains"/>
    <property type="match status" value="2"/>
</dbReference>
<dbReference type="SUPFAM" id="SSF55048">
    <property type="entry name" value="Probable ACP-binding domain of malonyl-CoA ACP transacylase"/>
    <property type="match status" value="1"/>
</dbReference>
<dbReference type="SUPFAM" id="SSF53335">
    <property type="entry name" value="S-adenosyl-L-methionine-dependent methyltransferases"/>
    <property type="match status" value="1"/>
</dbReference>
<dbReference type="SUPFAM" id="SSF53901">
    <property type="entry name" value="Thiolase-like"/>
    <property type="match status" value="1"/>
</dbReference>
<dbReference type="PROSITE" id="PS50075">
    <property type="entry name" value="CARRIER"/>
    <property type="match status" value="1"/>
</dbReference>
<dbReference type="PROSITE" id="PS00606">
    <property type="entry name" value="KS3_1"/>
    <property type="match status" value="1"/>
</dbReference>
<dbReference type="PROSITE" id="PS52004">
    <property type="entry name" value="KS3_2"/>
    <property type="match status" value="1"/>
</dbReference>
<dbReference type="PROSITE" id="PS00012">
    <property type="entry name" value="PHOSPHOPANTETHEINE"/>
    <property type="match status" value="1"/>
</dbReference>
<dbReference type="PROSITE" id="PS52019">
    <property type="entry name" value="PKS_MFAS_DH"/>
    <property type="match status" value="1"/>
</dbReference>
<evidence type="ECO:0000255" key="1"/>
<evidence type="ECO:0000255" key="2">
    <source>
        <dbReference type="PROSITE-ProRule" id="PRU00258"/>
    </source>
</evidence>
<evidence type="ECO:0000255" key="3">
    <source>
        <dbReference type="PROSITE-ProRule" id="PRU01348"/>
    </source>
</evidence>
<evidence type="ECO:0000255" key="4">
    <source>
        <dbReference type="PROSITE-ProRule" id="PRU01363"/>
    </source>
</evidence>
<evidence type="ECO:0000256" key="5">
    <source>
        <dbReference type="SAM" id="MobiDB-lite"/>
    </source>
</evidence>
<evidence type="ECO:0000269" key="6">
    <source>
    </source>
</evidence>
<evidence type="ECO:0000303" key="7">
    <source>
    </source>
</evidence>
<evidence type="ECO:0000305" key="8">
    <source>
    </source>
</evidence>
<organism>
    <name type="scientific">Gibberella zeae (strain ATCC MYA-4620 / CBS 123657 / FGSC 9075 / NRRL 31084 / PH-1)</name>
    <name type="common">Wheat head blight fungus</name>
    <name type="synonym">Fusarium graminearum</name>
    <dbReference type="NCBI Taxonomy" id="229533"/>
    <lineage>
        <taxon>Eukaryota</taxon>
        <taxon>Fungi</taxon>
        <taxon>Dikarya</taxon>
        <taxon>Ascomycota</taxon>
        <taxon>Pezizomycotina</taxon>
        <taxon>Sordariomycetes</taxon>
        <taxon>Hypocreomycetidae</taxon>
        <taxon>Hypocreales</taxon>
        <taxon>Nectriaceae</taxon>
        <taxon>Fusarium</taxon>
    </lineage>
</organism>
<proteinExistence type="inferred from homology"/>
<gene>
    <name evidence="7" type="primary">PKS6</name>
    <name type="ORF">FGRAMPH1_01T09371</name>
    <name evidence="7" type="ORF">FGSG_08208</name>
</gene>
<sequence length="2554" mass="277961">MGSLSAVPATNGNHAALNGSASTNGQHVNGSTHVNGNHSLNGSAQVNGHSATTANLEPIAVVGMSCRLPGDATDTQKLWELITKGRSAWSKVPTDRWNQEAFHDPAAEGKPGRTSTDGGHFLKDDIKAFDASFFGVNPIEATAMDPQQRLVLEIAYEAFENAGLTLQQLSGSNTGVYVGLWASDYQEMLLRDIDFPPIYQASGVGAAIASNRVSYCFNLHGPSLTLDTGCSASLVALHQAVHSLRAGETDKCFVAGVNLQLDPQRYGYQNKLSMFSKQGKSFTFDHRAKGASGYGRGEGCSGVVLMPLSKAQKQGFPIRAVIRNSVANQDGKTNGITVPSAAAQSAAIEKAYAQVGLTPYADYVEAHGTGTTVGDPIEAKAIAKVLGAGRQSDSPLPIGSLKANIGHTESAAGLTGLVKAVLMLENNMIPPQVNYEKPNPEIDLDALNLRIPISLENKPLKRISVNSFGYGGTNAHVVVDAADAIPIKPTNTDSQETKDTLRVREQLFVLSAASEKSSQDLVLNVAKYLESKADAADTDALLSRLAYTLSRRTVMENRIGVVASDLADLVEQLTKLSSEGIPRADRQTSPRIGFVFSGQGAQYPRMGQSLLGTWPTFTSSMKRAAECVKACGSSWDLLEELLKDASESRMEDPCIAQPMSTAVQISLVDALKDLGVIPTAVVGHSSGEIAAAYCAEAISFEDAMTVSYHRGRLTSELRLENKGKAGSMIAVGASAATVKQSIDQLGTAAANRITIACHNSPASVTVSGDADVIESLKQRLDEQDIWNRLLRTGGAAYHSPQMLQIAQKYHEAIKDVSGSVPASNVAMASSVTGEDQGDKPITRDYWVHNLVSPVRFTDALKKTCVGENGTRKVDLLLELGSHFQLESPIKQTLRTFTGEAAKVHYTGSLKRGEDAQLSMLQMLRSLYLQKSPVAFWKVNAGFGATFQLLTDLPPYPFDHSKTYWHEGRVSRAYKHRQNLPHELLGTLVHDNNPQEPRWRCLLNLKDVPWLSGHIIQGQTIFPATAYLSMVFQAARQDMAARNPQASINRFILRNVTFSQALVMENNKTDLEISLSLRPQAISARKSSQQWQEFRIFSTSADDVWIEHVRGLVQVILKSEAVQEDSFVPTRITLPPHAQHIPANQFYHRARDIGVNWSAPFDNLNDIKIAAGSCIADSSFVAGPSAGACEKDYVIHPGVMDAILYHGMMGVLIFDENDKSPVVPTFIEKMIVAEQDQAKPIEEVTCHAARTESALTFDIGIFEKNHEDNMVLQAWGVVATKLPDVSIGEGRKRDLCHVPDWATYLPKTTQEYIDGLCKKSLDDRSIIPEIKALEAMTVHYVKQALASTPEDEVAEGYQRNWYNWMKTLADQEPDPEYLKAGEEDDSVSAQVARRLGPRLGDILRGTTHSLSILNEDSMLSGLYLEGGNVRCISQIATYMGELGRLNPNMKIVEVGAGTGSATLPVLQALQAPNRVLASQYDFTDISPGFFPAARELLADYEGVVQYKILNAEKTAEENGFEPNSYDVLIASNVLHATPCIDAVLENVKTMLRPGGKLILMEPTENLPHYGLVFGSLAGWWAGVDEGRTLSPMLSRSQWIETLSKNGFINNGPIFEDYPVAEGGSIHVFVSEVPVPASTEAPLDVDIVSYSGEATYTDFAERLQKNLWDRSVQSCNVSSSMSGDKLSVIMPDFVDRVAWDMDGPLFESLRSRVAGSKVIIFVMCTAKSKEKRPSGDWIYGFVRSIRYEYASVRLVTLELESGLEAGVDALKTILNSPTADLSLPLEDIELEYMEREGQIFVSRVRSEPKFDNYVSRDLGRAGSEEALFLNERPMSAELGVPGVLDTIRWVDNPEITGPVDPDCVRLQLCAASINFKDVLVASGQLEGITQMRNDCSGIVLDVGANMTDKFKVGDRVCSLYSQSFTNYPMVHGLCCHVIPDDMDFADAASIPLVWSTVYYCLITIARLQKGESILIHSAAGAVGQASIMLAHHIGAEVFVTCGNDAKVELLNTEFGIPRDHIFSSRTTVFRDKIRAMTNGNGVDVVLNSLGGEMFRESCNTLAAHGRFVEIGRKDLMENALMPMEFLLNNITFSYVDFAHILATRTALASQLLGDVMKLFASGAVQHVRQIKYPISEMASAFRLVQAGKHTGKVILTVEPDVKVQVVPSKPSPVQLKPDATYLVVGGLGGLGKRLVDWTAEKGARNIVIFSRTAQPDADAQSFLDKLVSMGVTVRVEKCDVSSEESVIEALARIQETMPPIRGLFQAAMVLHDILLEHMTVEEWCKVTAPKVQGTWNLHKYLPEDMDFFVMLSSVVSMVGTVGAGNYASACAFQDGIARYRRRLGLTAYAVNIGAIVEAGYVSENPEVAVNLRKNGLGSVAISEFLSHLGDVIQNKTEYSQSSLGILPNGNERGLGEARWANDKRLAQIFGAETQAGNKTVGGGADNVGFALQSATTFQEAQDIICDAIVKQLATILAIQSDDIIPARSLDSYGLDSLVGVELRNWIGAYLQVNLPLLVMWNTSSINELAEIVTKGSRLVKVKVEDTEEEQVDVVKD</sequence>
<comment type="function">
    <text evidence="6 8">Highly reducing polyketide synthase; part of the gene cluster that mediates the biosynthesis of the lipopeptide fusaristatin A (PubMed:25412204). Fusaristatin A consists of a polyketide chain linked to three amino acid residues glutamine (Gln), dehydroalanine (dehydro-Ala), and beta-aminoisobutyric acid (PubMed:25412204). The biosynthesis starts with formation of a linear polyketide chain by the highly reducing polyketide synthase PKS6 (PubMed:25412204). The gene cluster does not contain an acyl-CoA ligase or an acyl-transferase, and it is therefore predicted that the polyketide is transferred directly to the nonribosomal peptide synthetase NRPS7 (Probable). Modules 1-3 from NRPS7 incorporate dehydro-Ala, Gln, and beta-aminoisobutyric acid in the compound, which is released by cyclization (PubMed:25412204). The beta-aminoisobutyric acid units are most likely not freely available to the NRPS, but can be synthesized from thymine, which requires a dehydrogenase, a monooxygenase, and an aminotransferase. The fusaristatin A cluster contains a cytochrome P450 monooxygenase (FGSG_08207) and an aminotransferase (FGSG_17085), which theoretically can perform two of the enzymatic steps (Probable). The enzymes may however also be involved in biosynthesis of dehydroalanine or modification of the polyketide (Probable). The dehydro-Ala residue can be a result of cyclization, where serine is dehydrated (Probable). The last gene of the cluster encodes a protein with an A/B barrel domain found in variable enzymes, which hampers functional prediction (Probable).</text>
</comment>
<comment type="pathway">
    <text evidence="6">Secondary metabolite biosynthesis.</text>
</comment>
<comment type="domain">
    <text evidence="8">Multidomain protein; including a ketosynthase (KS) that catalyzes repeated decarboxylative condensation to elongate the polyketide backbone; a malonyl-CoA:ACP transacylase (MAT) that selects and transfers the extender unit malonyl-CoA; a dehydratase (DH) domain that reduces hydroxyl groups to enoyl groups; a methyltransferase (CMeT) domain responsible for the incorporation of methyl groups; an enoylreductase (ER) domain that reduces enoyl groups to alkyl group; a ketoreductase (KR) domain that catalyzes beta-ketoreduction steps; and an acyl-carrier protein (ACP) that serves as the tether of the growing and completed polyketide via its phosphopantetheinyl arm.</text>
</comment>
<comment type="disruption phenotype">
    <text evidence="6">impairs the production of fusaristatin A.</text>
</comment>
<feature type="chain" id="PRO_0000445363" description="Highly reducing polyketide synthase PKS6">
    <location>
        <begin position="1"/>
        <end position="2554"/>
    </location>
</feature>
<feature type="domain" description="Ketosynthase family 3 (KS3)" evidence="3 8">
    <location>
        <begin position="56"/>
        <end position="481"/>
    </location>
</feature>
<feature type="domain" description="PKS/mFAS DH" evidence="4">
    <location>
        <begin position="981"/>
        <end position="1287"/>
    </location>
</feature>
<feature type="domain" description="Carrier" evidence="2 8">
    <location>
        <begin position="2457"/>
        <end position="2534"/>
    </location>
</feature>
<feature type="region of interest" description="Disordered" evidence="5">
    <location>
        <begin position="1"/>
        <end position="48"/>
    </location>
</feature>
<feature type="region of interest" description="Malonyl-CoA:ACP transacylase (MAT) domain" evidence="1 8">
    <location>
        <begin position="595"/>
        <end position="913"/>
    </location>
</feature>
<feature type="region of interest" description="Dehydratase (DH) domain" evidence="1 8">
    <location>
        <begin position="981"/>
        <end position="1281"/>
    </location>
</feature>
<feature type="region of interest" description="N-terminal hotdog fold" evidence="4">
    <location>
        <begin position="981"/>
        <end position="1119"/>
    </location>
</feature>
<feature type="region of interest" description="C-terminal hotdog fold" evidence="4">
    <location>
        <begin position="1137"/>
        <end position="1287"/>
    </location>
</feature>
<feature type="region of interest" description="Methyltransferase (CMet) domain" evidence="1 8">
    <location>
        <begin position="1451"/>
        <end position="1556"/>
    </location>
</feature>
<feature type="region of interest" description="Enoyl reductase (ER) domain" evidence="1 8">
    <location>
        <begin position="1840"/>
        <end position="2153"/>
    </location>
</feature>
<feature type="region of interest" description="Ketoreductase (KR) domain" evidence="1 8">
    <location>
        <begin position="2177"/>
        <end position="2353"/>
    </location>
</feature>
<feature type="compositionally biased region" description="Polar residues" evidence="5">
    <location>
        <begin position="8"/>
        <end position="48"/>
    </location>
</feature>
<feature type="active site" description="For beta-ketoacyl synthase activity" evidence="3">
    <location>
        <position position="230"/>
    </location>
</feature>
<feature type="active site" description="For beta-ketoacyl synthase activity" evidence="3">
    <location>
        <position position="367"/>
    </location>
</feature>
<feature type="active site" description="For beta-ketoacyl synthase activity" evidence="3">
    <location>
        <position position="407"/>
    </location>
</feature>
<feature type="active site" description="Proton acceptor; for dehydratase activity" evidence="4">
    <location>
        <position position="1013"/>
    </location>
</feature>
<feature type="active site" description="Proton donor; for dehydratase activity" evidence="4">
    <location>
        <position position="1200"/>
    </location>
</feature>
<feature type="modified residue" description="O-(pantetheine 4'-phosphoryl)serine" evidence="2">
    <location>
        <position position="2494"/>
    </location>
</feature>
<protein>
    <recommendedName>
        <fullName evidence="7">Highly reducing polyketide synthase PKS6</fullName>
        <shortName evidence="7">HR-PKS PKS6</shortName>
        <ecNumber evidence="8">2.3.1.-</ecNumber>
    </recommendedName>
    <alternativeName>
        <fullName evidence="7">Fusaristatin A biosynthesis cluster protein PKS6</fullName>
    </alternativeName>
</protein>